<keyword id="KW-0963">Cytoplasm</keyword>
<keyword id="KW-0479">Metal-binding</keyword>
<keyword id="KW-0520">NAD</keyword>
<keyword id="KW-1185">Reference proteome</keyword>
<keyword id="KW-0808">Transferase</keyword>
<keyword id="KW-0862">Zinc</keyword>
<gene>
    <name evidence="1" type="primary">cobB</name>
    <name type="ordered locus">BQ2027_MB1182C</name>
</gene>
<sequence>MRVAVLSGAGISAESGVPTFRDDKNGLWARFDPYELSSTQGWLRNPERVWGWYLWRHYLVANVEPNDGHRAIAAWQDHAEVSVITQNVDDLHERAGSGAVHHLHGSLFEFRCARCGVPYTDALPEMPEPAIEVEPPVCDCGGLIRPDIVWFGEPLPEEPWRSAVEATGSADVMVVVGTSAIVYPAAGLPDLALARGTAVIEVNPEPTPLSGSATISIRESASQALPGLLERLPALLK</sequence>
<feature type="chain" id="PRO_0000110332" description="NAD-dependent protein deacylase">
    <location>
        <begin position="1"/>
        <end position="237"/>
    </location>
</feature>
<feature type="domain" description="Deacetylase sirtuin-type" evidence="2">
    <location>
        <begin position="1"/>
        <end position="235"/>
    </location>
</feature>
<feature type="active site" description="Proton acceptor" evidence="2">
    <location>
        <position position="104"/>
    </location>
</feature>
<feature type="binding site" evidence="1">
    <location>
        <begin position="8"/>
        <end position="28"/>
    </location>
    <ligand>
        <name>NAD(+)</name>
        <dbReference type="ChEBI" id="CHEBI:57540"/>
    </ligand>
</feature>
<feature type="binding site" evidence="1">
    <location>
        <position position="53"/>
    </location>
    <ligand>
        <name>substrate</name>
    </ligand>
</feature>
<feature type="binding site" evidence="1">
    <location>
        <position position="56"/>
    </location>
    <ligand>
        <name>substrate</name>
    </ligand>
</feature>
<feature type="binding site" evidence="1">
    <location>
        <begin position="86"/>
        <end position="89"/>
    </location>
    <ligand>
        <name>NAD(+)</name>
        <dbReference type="ChEBI" id="CHEBI:57540"/>
    </ligand>
</feature>
<feature type="binding site" evidence="1">
    <location>
        <position position="112"/>
    </location>
    <ligand>
        <name>Zn(2+)</name>
        <dbReference type="ChEBI" id="CHEBI:29105"/>
    </ligand>
</feature>
<feature type="binding site" evidence="1">
    <location>
        <position position="115"/>
    </location>
    <ligand>
        <name>Zn(2+)</name>
        <dbReference type="ChEBI" id="CHEBI:29105"/>
    </ligand>
</feature>
<feature type="binding site" evidence="1">
    <location>
        <position position="138"/>
    </location>
    <ligand>
        <name>Zn(2+)</name>
        <dbReference type="ChEBI" id="CHEBI:29105"/>
    </ligand>
</feature>
<feature type="binding site" evidence="1">
    <location>
        <position position="140"/>
    </location>
    <ligand>
        <name>Zn(2+)</name>
        <dbReference type="ChEBI" id="CHEBI:29105"/>
    </ligand>
</feature>
<feature type="binding site" evidence="1">
    <location>
        <begin position="177"/>
        <end position="179"/>
    </location>
    <ligand>
        <name>NAD(+)</name>
        <dbReference type="ChEBI" id="CHEBI:57540"/>
    </ligand>
</feature>
<feature type="binding site" evidence="1">
    <location>
        <begin position="203"/>
        <end position="205"/>
    </location>
    <ligand>
        <name>NAD(+)</name>
        <dbReference type="ChEBI" id="CHEBI:57540"/>
    </ligand>
</feature>
<feature type="binding site" evidence="1">
    <location>
        <position position="221"/>
    </location>
    <ligand>
        <name>NAD(+)</name>
        <dbReference type="ChEBI" id="CHEBI:57540"/>
    </ligand>
</feature>
<proteinExistence type="inferred from homology"/>
<dbReference type="EC" id="2.3.1.286" evidence="1 2"/>
<dbReference type="EMBL" id="LT708304">
    <property type="protein sequence ID" value="SIT99782.1"/>
    <property type="molecule type" value="Genomic_DNA"/>
</dbReference>
<dbReference type="RefSeq" id="NP_854837.1">
    <property type="nucleotide sequence ID" value="NC_002945.3"/>
</dbReference>
<dbReference type="RefSeq" id="WP_003406044.1">
    <property type="nucleotide sequence ID" value="NC_002945.4"/>
</dbReference>
<dbReference type="SMR" id="P66814"/>
<dbReference type="KEGG" id="mbo:BQ2027_MB1182C"/>
<dbReference type="PATRIC" id="fig|233413.5.peg.1297"/>
<dbReference type="Proteomes" id="UP000001419">
    <property type="component" value="Chromosome"/>
</dbReference>
<dbReference type="GO" id="GO:0005737">
    <property type="term" value="C:cytoplasm"/>
    <property type="evidence" value="ECO:0007669"/>
    <property type="project" value="UniProtKB-SubCell"/>
</dbReference>
<dbReference type="GO" id="GO:0017136">
    <property type="term" value="F:histone deacetylase activity, NAD-dependent"/>
    <property type="evidence" value="ECO:0007669"/>
    <property type="project" value="TreeGrafter"/>
</dbReference>
<dbReference type="GO" id="GO:0070403">
    <property type="term" value="F:NAD+ binding"/>
    <property type="evidence" value="ECO:0007669"/>
    <property type="project" value="UniProtKB-UniRule"/>
</dbReference>
<dbReference type="GO" id="GO:0036054">
    <property type="term" value="F:protein-malonyllysine demalonylase activity"/>
    <property type="evidence" value="ECO:0007669"/>
    <property type="project" value="InterPro"/>
</dbReference>
<dbReference type="GO" id="GO:0036055">
    <property type="term" value="F:protein-succinyllysine desuccinylase activity"/>
    <property type="evidence" value="ECO:0007669"/>
    <property type="project" value="UniProtKB-UniRule"/>
</dbReference>
<dbReference type="GO" id="GO:0008270">
    <property type="term" value="F:zinc ion binding"/>
    <property type="evidence" value="ECO:0007669"/>
    <property type="project" value="UniProtKB-UniRule"/>
</dbReference>
<dbReference type="CDD" id="cd01412">
    <property type="entry name" value="SIRT5_Af1_CobB"/>
    <property type="match status" value="1"/>
</dbReference>
<dbReference type="Gene3D" id="3.30.1600.10">
    <property type="entry name" value="SIR2/SIRT2 'Small Domain"/>
    <property type="match status" value="1"/>
</dbReference>
<dbReference type="Gene3D" id="3.40.50.1220">
    <property type="entry name" value="TPP-binding domain"/>
    <property type="match status" value="1"/>
</dbReference>
<dbReference type="HAMAP" id="MF_01121">
    <property type="entry name" value="Sirtuin_ClassIII"/>
    <property type="match status" value="1"/>
</dbReference>
<dbReference type="InterPro" id="IPR029035">
    <property type="entry name" value="DHS-like_NAD/FAD-binding_dom"/>
</dbReference>
<dbReference type="InterPro" id="IPR050134">
    <property type="entry name" value="NAD-dep_sirtuin_deacylases"/>
</dbReference>
<dbReference type="InterPro" id="IPR003000">
    <property type="entry name" value="Sirtuin"/>
</dbReference>
<dbReference type="InterPro" id="IPR026591">
    <property type="entry name" value="Sirtuin_cat_small_dom_sf"/>
</dbReference>
<dbReference type="InterPro" id="IPR027546">
    <property type="entry name" value="Sirtuin_class_III"/>
</dbReference>
<dbReference type="InterPro" id="IPR026590">
    <property type="entry name" value="Ssirtuin_cat_dom"/>
</dbReference>
<dbReference type="NCBIfam" id="NF001753">
    <property type="entry name" value="PRK00481.1-3"/>
    <property type="match status" value="1"/>
</dbReference>
<dbReference type="PANTHER" id="PTHR11085:SF4">
    <property type="entry name" value="NAD-DEPENDENT PROTEIN DEACYLASE"/>
    <property type="match status" value="1"/>
</dbReference>
<dbReference type="PANTHER" id="PTHR11085">
    <property type="entry name" value="NAD-DEPENDENT PROTEIN DEACYLASE SIRTUIN-5, MITOCHONDRIAL-RELATED"/>
    <property type="match status" value="1"/>
</dbReference>
<dbReference type="Pfam" id="PF02146">
    <property type="entry name" value="SIR2"/>
    <property type="match status" value="1"/>
</dbReference>
<dbReference type="SUPFAM" id="SSF52467">
    <property type="entry name" value="DHS-like NAD/FAD-binding domain"/>
    <property type="match status" value="1"/>
</dbReference>
<dbReference type="PROSITE" id="PS50305">
    <property type="entry name" value="SIRTUIN"/>
    <property type="match status" value="1"/>
</dbReference>
<accession>P66814</accession>
<accession>A0A1R3XZL0</accession>
<accession>O06549</accession>
<accession>Q7U0J1</accession>
<accession>X2BH48</accession>
<comment type="function">
    <text evidence="1">NAD-dependent lysine deacetylase and desuccinylase that specifically removes acetyl and succinyl groups on target proteins. Modulates the activities of several proteins which are inactive in their acylated form.</text>
</comment>
<comment type="catalytic activity">
    <reaction evidence="1">
        <text>N(6)-acetyl-L-lysyl-[protein] + NAD(+) + H2O = 2''-O-acetyl-ADP-D-ribose + nicotinamide + L-lysyl-[protein]</text>
        <dbReference type="Rhea" id="RHEA:43636"/>
        <dbReference type="Rhea" id="RHEA-COMP:9752"/>
        <dbReference type="Rhea" id="RHEA-COMP:10731"/>
        <dbReference type="ChEBI" id="CHEBI:15377"/>
        <dbReference type="ChEBI" id="CHEBI:17154"/>
        <dbReference type="ChEBI" id="CHEBI:29969"/>
        <dbReference type="ChEBI" id="CHEBI:57540"/>
        <dbReference type="ChEBI" id="CHEBI:61930"/>
        <dbReference type="ChEBI" id="CHEBI:83767"/>
        <dbReference type="EC" id="2.3.1.286"/>
    </reaction>
</comment>
<comment type="catalytic activity">
    <reaction evidence="1">
        <text>N(6)-succinyl-L-lysyl-[protein] + NAD(+) + H2O = 2''-O-succinyl-ADP-D-ribose + nicotinamide + L-lysyl-[protein]</text>
        <dbReference type="Rhea" id="RHEA:47668"/>
        <dbReference type="Rhea" id="RHEA-COMP:9752"/>
        <dbReference type="Rhea" id="RHEA-COMP:11877"/>
        <dbReference type="ChEBI" id="CHEBI:15377"/>
        <dbReference type="ChEBI" id="CHEBI:17154"/>
        <dbReference type="ChEBI" id="CHEBI:29969"/>
        <dbReference type="ChEBI" id="CHEBI:57540"/>
        <dbReference type="ChEBI" id="CHEBI:87830"/>
        <dbReference type="ChEBI" id="CHEBI:87832"/>
    </reaction>
</comment>
<comment type="cofactor">
    <cofactor evidence="1">
        <name>Zn(2+)</name>
        <dbReference type="ChEBI" id="CHEBI:29105"/>
    </cofactor>
    <text evidence="1">Binds 1 zinc ion per subunit.</text>
</comment>
<comment type="subcellular location">
    <subcellularLocation>
        <location evidence="1">Cytoplasm</location>
    </subcellularLocation>
</comment>
<comment type="domain">
    <text evidence="1">2 residues (Tyr-53 and Arg-56) present in a large hydrophobic pocket are probably involved in substrate specificity. They are important for desuccinylation activity, but dispensable for deacetylation activity.</text>
</comment>
<comment type="similarity">
    <text evidence="1">Belongs to the sirtuin family. Class III subfamily.</text>
</comment>
<evidence type="ECO:0000255" key="1">
    <source>
        <dbReference type="HAMAP-Rule" id="MF_01121"/>
    </source>
</evidence>
<evidence type="ECO:0000255" key="2">
    <source>
        <dbReference type="PROSITE-ProRule" id="PRU00236"/>
    </source>
</evidence>
<reference key="1">
    <citation type="journal article" date="2003" name="Proc. Natl. Acad. Sci. U.S.A.">
        <title>The complete genome sequence of Mycobacterium bovis.</title>
        <authorList>
            <person name="Garnier T."/>
            <person name="Eiglmeier K."/>
            <person name="Camus J.-C."/>
            <person name="Medina N."/>
            <person name="Mansoor H."/>
            <person name="Pryor M."/>
            <person name="Duthoy S."/>
            <person name="Grondin S."/>
            <person name="Lacroix C."/>
            <person name="Monsempe C."/>
            <person name="Simon S."/>
            <person name="Harris B."/>
            <person name="Atkin R."/>
            <person name="Doggett J."/>
            <person name="Mayes R."/>
            <person name="Keating L."/>
            <person name="Wheeler P.R."/>
            <person name="Parkhill J."/>
            <person name="Barrell B.G."/>
            <person name="Cole S.T."/>
            <person name="Gordon S.V."/>
            <person name="Hewinson R.G."/>
        </authorList>
    </citation>
    <scope>NUCLEOTIDE SEQUENCE [LARGE SCALE GENOMIC DNA]</scope>
    <source>
        <strain>ATCC BAA-935 / AF2122/97</strain>
    </source>
</reference>
<reference key="2">
    <citation type="journal article" date="2017" name="Genome Announc.">
        <title>Updated reference genome sequence and annotation of Mycobacterium bovis AF2122/97.</title>
        <authorList>
            <person name="Malone K.M."/>
            <person name="Farrell D."/>
            <person name="Stuber T.P."/>
            <person name="Schubert O.T."/>
            <person name="Aebersold R."/>
            <person name="Robbe-Austerman S."/>
            <person name="Gordon S.V."/>
        </authorList>
    </citation>
    <scope>NUCLEOTIDE SEQUENCE [LARGE SCALE GENOMIC DNA]</scope>
    <scope>GENOME REANNOTATION</scope>
    <source>
        <strain>ATCC BAA-935 / AF2122/97</strain>
    </source>
</reference>
<organism>
    <name type="scientific">Mycobacterium bovis (strain ATCC BAA-935 / AF2122/97)</name>
    <dbReference type="NCBI Taxonomy" id="233413"/>
    <lineage>
        <taxon>Bacteria</taxon>
        <taxon>Bacillati</taxon>
        <taxon>Actinomycetota</taxon>
        <taxon>Actinomycetes</taxon>
        <taxon>Mycobacteriales</taxon>
        <taxon>Mycobacteriaceae</taxon>
        <taxon>Mycobacterium</taxon>
        <taxon>Mycobacterium tuberculosis complex</taxon>
    </lineage>
</organism>
<protein>
    <recommendedName>
        <fullName evidence="1">NAD-dependent protein deacylase</fullName>
        <ecNumber evidence="1 2">2.3.1.286</ecNumber>
    </recommendedName>
    <alternativeName>
        <fullName evidence="1">Regulatory protein SIR2 homolog</fullName>
    </alternativeName>
</protein>
<name>NPD_MYCBO</name>